<sequence length="230" mass="24921">MALVLDAEVVLLDIEGTIASQSFVLDVLFGYSRARMADFVAARRGDPEIEAILADVAARAGGTDPVAALLAWQDADQKIPPLKKLQGRIWESGYKEGAYVSHIYDDALIALRRFKAAGLPLYIFSSGSVQAQIQYFQFSSAGDLRSLFDGHFDTDIGAKVEAASYQAIADTIGARPSRIVFFSDNPRELEAAAAAGIVVVHVVKGNTPSDPRFPEITDFSTVELRHSKTE</sequence>
<feature type="chain" id="PRO_0000357359" description="Enolase-phosphatase E1">
    <location>
        <begin position="1"/>
        <end position="230"/>
    </location>
</feature>
<dbReference type="EC" id="3.1.3.77" evidence="1"/>
<dbReference type="EMBL" id="CP000494">
    <property type="protein sequence ID" value="ABQ34672.1"/>
    <property type="molecule type" value="Genomic_DNA"/>
</dbReference>
<dbReference type="RefSeq" id="WP_012042700.1">
    <property type="nucleotide sequence ID" value="NC_009485.1"/>
</dbReference>
<dbReference type="SMR" id="A5EES8"/>
<dbReference type="STRING" id="288000.BBta_2512"/>
<dbReference type="KEGG" id="bbt:BBta_2512"/>
<dbReference type="eggNOG" id="COG4229">
    <property type="taxonomic scope" value="Bacteria"/>
</dbReference>
<dbReference type="HOGENOM" id="CLU_023273_0_0_5"/>
<dbReference type="OrthoDB" id="9797416at2"/>
<dbReference type="UniPathway" id="UPA00904">
    <property type="reaction ID" value="UER00876"/>
</dbReference>
<dbReference type="UniPathway" id="UPA00904">
    <property type="reaction ID" value="UER00877"/>
</dbReference>
<dbReference type="Proteomes" id="UP000000246">
    <property type="component" value="Chromosome"/>
</dbReference>
<dbReference type="GO" id="GO:0043715">
    <property type="term" value="F:2,3-diketo-5-methylthiopentyl-1-phosphate enolase activity"/>
    <property type="evidence" value="ECO:0007669"/>
    <property type="project" value="UniProtKB-UniRule"/>
</dbReference>
<dbReference type="GO" id="GO:0043716">
    <property type="term" value="F:2-hydroxy-3-keto-5-methylthiopentenyl-1-phosphate phosphatase activity"/>
    <property type="evidence" value="ECO:0007669"/>
    <property type="project" value="UniProtKB-UniRule"/>
</dbReference>
<dbReference type="GO" id="GO:0043874">
    <property type="term" value="F:acireductone synthase activity"/>
    <property type="evidence" value="ECO:0007669"/>
    <property type="project" value="UniProtKB-EC"/>
</dbReference>
<dbReference type="GO" id="GO:0000287">
    <property type="term" value="F:magnesium ion binding"/>
    <property type="evidence" value="ECO:0007669"/>
    <property type="project" value="UniProtKB-UniRule"/>
</dbReference>
<dbReference type="GO" id="GO:0019509">
    <property type="term" value="P:L-methionine salvage from methylthioadenosine"/>
    <property type="evidence" value="ECO:0007669"/>
    <property type="project" value="UniProtKB-UniRule"/>
</dbReference>
<dbReference type="CDD" id="cd01629">
    <property type="entry name" value="HAD_EP"/>
    <property type="match status" value="1"/>
</dbReference>
<dbReference type="Gene3D" id="1.10.720.60">
    <property type="match status" value="1"/>
</dbReference>
<dbReference type="Gene3D" id="3.40.50.1000">
    <property type="entry name" value="HAD superfamily/HAD-like"/>
    <property type="match status" value="1"/>
</dbReference>
<dbReference type="HAMAP" id="MF_01681">
    <property type="entry name" value="Salvage_MtnC"/>
    <property type="match status" value="1"/>
</dbReference>
<dbReference type="InterPro" id="IPR023943">
    <property type="entry name" value="Enolase-ppase_E1"/>
</dbReference>
<dbReference type="InterPro" id="IPR036412">
    <property type="entry name" value="HAD-like_sf"/>
</dbReference>
<dbReference type="InterPro" id="IPR006439">
    <property type="entry name" value="HAD-SF_hydro_IA"/>
</dbReference>
<dbReference type="InterPro" id="IPR023214">
    <property type="entry name" value="HAD_sf"/>
</dbReference>
<dbReference type="NCBIfam" id="TIGR01691">
    <property type="entry name" value="enolase-ppase"/>
    <property type="match status" value="1"/>
</dbReference>
<dbReference type="NCBIfam" id="TIGR01509">
    <property type="entry name" value="HAD-SF-IA-v3"/>
    <property type="match status" value="1"/>
</dbReference>
<dbReference type="PANTHER" id="PTHR20371">
    <property type="entry name" value="ENOLASE-PHOSPHATASE E1"/>
    <property type="match status" value="1"/>
</dbReference>
<dbReference type="PANTHER" id="PTHR20371:SF1">
    <property type="entry name" value="ENOLASE-PHOSPHATASE E1"/>
    <property type="match status" value="1"/>
</dbReference>
<dbReference type="Pfam" id="PF00702">
    <property type="entry name" value="Hydrolase"/>
    <property type="match status" value="1"/>
</dbReference>
<dbReference type="PRINTS" id="PR00413">
    <property type="entry name" value="HADHALOGNASE"/>
</dbReference>
<dbReference type="SFLD" id="SFLDG01133">
    <property type="entry name" value="C1.5.4:_Enolase-phosphatase_Li"/>
    <property type="match status" value="1"/>
</dbReference>
<dbReference type="SFLD" id="SFLDS00003">
    <property type="entry name" value="Haloacid_Dehalogenase"/>
    <property type="match status" value="1"/>
</dbReference>
<dbReference type="SUPFAM" id="SSF56784">
    <property type="entry name" value="HAD-like"/>
    <property type="match status" value="1"/>
</dbReference>
<organism>
    <name type="scientific">Bradyrhizobium sp. (strain BTAi1 / ATCC BAA-1182)</name>
    <dbReference type="NCBI Taxonomy" id="288000"/>
    <lineage>
        <taxon>Bacteria</taxon>
        <taxon>Pseudomonadati</taxon>
        <taxon>Pseudomonadota</taxon>
        <taxon>Alphaproteobacteria</taxon>
        <taxon>Hyphomicrobiales</taxon>
        <taxon>Nitrobacteraceae</taxon>
        <taxon>Bradyrhizobium</taxon>
    </lineage>
</organism>
<protein>
    <recommendedName>
        <fullName evidence="1">Enolase-phosphatase E1</fullName>
        <ecNumber evidence="1">3.1.3.77</ecNumber>
    </recommendedName>
    <alternativeName>
        <fullName evidence="1">2,3-diketo-5-methylthio-1-phosphopentane phosphatase</fullName>
    </alternativeName>
</protein>
<accession>A5EES8</accession>
<proteinExistence type="inferred from homology"/>
<comment type="function">
    <text evidence="1">Bifunctional enzyme that catalyzes the enolization of 2,3-diketo-5-methylthiopentyl-1-phosphate (DK-MTP-1-P) into the intermediate 2-hydroxy-3-keto-5-methylthiopentenyl-1-phosphate (HK-MTPenyl-1-P), which is then dephosphorylated to form the acireductone 1,2-dihydroxy-3-keto-5-methylthiopentene (DHK-MTPene).</text>
</comment>
<comment type="catalytic activity">
    <reaction evidence="1">
        <text>5-methylsulfanyl-2,3-dioxopentyl phosphate + H2O = 1,2-dihydroxy-5-(methylsulfanyl)pent-1-en-3-one + phosphate</text>
        <dbReference type="Rhea" id="RHEA:21700"/>
        <dbReference type="ChEBI" id="CHEBI:15377"/>
        <dbReference type="ChEBI" id="CHEBI:43474"/>
        <dbReference type="ChEBI" id="CHEBI:49252"/>
        <dbReference type="ChEBI" id="CHEBI:58828"/>
        <dbReference type="EC" id="3.1.3.77"/>
    </reaction>
</comment>
<comment type="cofactor">
    <cofactor evidence="1">
        <name>Mg(2+)</name>
        <dbReference type="ChEBI" id="CHEBI:18420"/>
    </cofactor>
    <text evidence="1">Binds 1 Mg(2+) ion per subunit.</text>
</comment>
<comment type="pathway">
    <text evidence="1">Amino-acid biosynthesis; L-methionine biosynthesis via salvage pathway; L-methionine from S-methyl-5-thio-alpha-D-ribose 1-phosphate: step 3/6.</text>
</comment>
<comment type="pathway">
    <text evidence="1">Amino-acid biosynthesis; L-methionine biosynthesis via salvage pathway; L-methionine from S-methyl-5-thio-alpha-D-ribose 1-phosphate: step 4/6.</text>
</comment>
<comment type="subunit">
    <text evidence="1">Monomer.</text>
</comment>
<comment type="similarity">
    <text evidence="1">Belongs to the HAD-like hydrolase superfamily. MasA/MtnC family.</text>
</comment>
<evidence type="ECO:0000255" key="1">
    <source>
        <dbReference type="HAMAP-Rule" id="MF_01681"/>
    </source>
</evidence>
<gene>
    <name evidence="1" type="primary">mtnC</name>
    <name type="ordered locus">BBta_2512</name>
</gene>
<keyword id="KW-0028">Amino-acid biosynthesis</keyword>
<keyword id="KW-0378">Hydrolase</keyword>
<keyword id="KW-0460">Magnesium</keyword>
<keyword id="KW-0479">Metal-binding</keyword>
<keyword id="KW-0486">Methionine biosynthesis</keyword>
<keyword id="KW-1185">Reference proteome</keyword>
<reference key="1">
    <citation type="journal article" date="2007" name="Science">
        <title>Legumes symbioses: absence of nod genes in photosynthetic bradyrhizobia.</title>
        <authorList>
            <person name="Giraud E."/>
            <person name="Moulin L."/>
            <person name="Vallenet D."/>
            <person name="Barbe V."/>
            <person name="Cytryn E."/>
            <person name="Avarre J.-C."/>
            <person name="Jaubert M."/>
            <person name="Simon D."/>
            <person name="Cartieaux F."/>
            <person name="Prin Y."/>
            <person name="Bena G."/>
            <person name="Hannibal L."/>
            <person name="Fardoux J."/>
            <person name="Kojadinovic M."/>
            <person name="Vuillet L."/>
            <person name="Lajus A."/>
            <person name="Cruveiller S."/>
            <person name="Rouy Z."/>
            <person name="Mangenot S."/>
            <person name="Segurens B."/>
            <person name="Dossat C."/>
            <person name="Franck W.L."/>
            <person name="Chang W.-S."/>
            <person name="Saunders E."/>
            <person name="Bruce D."/>
            <person name="Richardson P."/>
            <person name="Normand P."/>
            <person name="Dreyfus B."/>
            <person name="Pignol D."/>
            <person name="Stacey G."/>
            <person name="Emerich D."/>
            <person name="Vermeglio A."/>
            <person name="Medigue C."/>
            <person name="Sadowsky M."/>
        </authorList>
    </citation>
    <scope>NUCLEOTIDE SEQUENCE [LARGE SCALE GENOMIC DNA]</scope>
    <source>
        <strain>BTAi1 / ATCC BAA-1182</strain>
    </source>
</reference>
<name>MTNC_BRASB</name>